<name>ERCC8_BOVIN</name>
<reference key="1">
    <citation type="journal article" date="2005" name="BMC Genomics">
        <title>Characterization of 954 bovine full-CDS cDNA sequences.</title>
        <authorList>
            <person name="Harhay G.P."/>
            <person name="Sonstegard T.S."/>
            <person name="Keele J.W."/>
            <person name="Heaton M.P."/>
            <person name="Clawson M.L."/>
            <person name="Snelling W.M."/>
            <person name="Wiedmann R.T."/>
            <person name="Van Tassell C.P."/>
            <person name="Smith T.P.L."/>
        </authorList>
    </citation>
    <scope>NUCLEOTIDE SEQUENCE [LARGE SCALE MRNA]</scope>
</reference>
<dbReference type="EMBL" id="BT021196">
    <property type="protein sequence ID" value="AAX31378.1"/>
    <property type="molecule type" value="mRNA"/>
</dbReference>
<dbReference type="RefSeq" id="NP_001103651.1">
    <property type="nucleotide sequence ID" value="NM_001110181.1"/>
</dbReference>
<dbReference type="SMR" id="Q5BIM8"/>
<dbReference type="FunCoup" id="Q5BIM8">
    <property type="interactions" value="3819"/>
</dbReference>
<dbReference type="STRING" id="9913.ENSBTAP00000028792"/>
<dbReference type="PaxDb" id="9913-ENSBTAP00000028792"/>
<dbReference type="Ensembl" id="ENSBTAT00000028792.6">
    <property type="protein sequence ID" value="ENSBTAP00000028792.5"/>
    <property type="gene ID" value="ENSBTAG00000021606.7"/>
</dbReference>
<dbReference type="GeneID" id="518857"/>
<dbReference type="KEGG" id="bta:518857"/>
<dbReference type="CTD" id="1161"/>
<dbReference type="VEuPathDB" id="HostDB:ENSBTAG00000021606"/>
<dbReference type="VGNC" id="VGNC:28574">
    <property type="gene designation" value="ERCC8"/>
</dbReference>
<dbReference type="eggNOG" id="KOG4283">
    <property type="taxonomic scope" value="Eukaryota"/>
</dbReference>
<dbReference type="GeneTree" id="ENSGT00390000009065"/>
<dbReference type="HOGENOM" id="CLU_032951_2_2_1"/>
<dbReference type="InParanoid" id="Q5BIM8"/>
<dbReference type="OMA" id="WIPAPRE"/>
<dbReference type="OrthoDB" id="361494at2759"/>
<dbReference type="TreeFam" id="TF101237"/>
<dbReference type="Reactome" id="R-BTA-6781823">
    <property type="pathway name" value="Formation of TC-NER Pre-Incision Complex"/>
</dbReference>
<dbReference type="Reactome" id="R-BTA-6782135">
    <property type="pathway name" value="Dual incision in TC-NER"/>
</dbReference>
<dbReference type="Reactome" id="R-BTA-6782210">
    <property type="pathway name" value="Gap-filling DNA repair synthesis and ligation in TC-NER"/>
</dbReference>
<dbReference type="Reactome" id="R-BTA-8951664">
    <property type="pathway name" value="Neddylation"/>
</dbReference>
<dbReference type="UniPathway" id="UPA00143"/>
<dbReference type="Proteomes" id="UP000009136">
    <property type="component" value="Chromosome 20"/>
</dbReference>
<dbReference type="Bgee" id="ENSBTAG00000021606">
    <property type="expression patterns" value="Expressed in oocyte and 106 other cell types or tissues"/>
</dbReference>
<dbReference type="GO" id="GO:0080008">
    <property type="term" value="C:Cul4-RING E3 ubiquitin ligase complex"/>
    <property type="evidence" value="ECO:0000250"/>
    <property type="project" value="UniProtKB"/>
</dbReference>
<dbReference type="GO" id="GO:0031464">
    <property type="term" value="C:Cul4A-RING E3 ubiquitin ligase complex"/>
    <property type="evidence" value="ECO:0000318"/>
    <property type="project" value="GO_Central"/>
</dbReference>
<dbReference type="GO" id="GO:0016363">
    <property type="term" value="C:nuclear matrix"/>
    <property type="evidence" value="ECO:0000250"/>
    <property type="project" value="UniProtKB"/>
</dbReference>
<dbReference type="GO" id="GO:0000109">
    <property type="term" value="C:nucleotide-excision repair complex"/>
    <property type="evidence" value="ECO:0000318"/>
    <property type="project" value="GO_Central"/>
</dbReference>
<dbReference type="GO" id="GO:0005634">
    <property type="term" value="C:nucleus"/>
    <property type="evidence" value="ECO:0000250"/>
    <property type="project" value="UniProtKB"/>
</dbReference>
<dbReference type="GO" id="GO:0032991">
    <property type="term" value="C:protein-containing complex"/>
    <property type="evidence" value="ECO:0000250"/>
    <property type="project" value="UniProtKB"/>
</dbReference>
<dbReference type="GO" id="GO:0090734">
    <property type="term" value="C:site of DNA damage"/>
    <property type="evidence" value="ECO:0000250"/>
    <property type="project" value="UniProtKB"/>
</dbReference>
<dbReference type="GO" id="GO:1990756">
    <property type="term" value="F:ubiquitin-like ligase-substrate adaptor activity"/>
    <property type="evidence" value="ECO:0000250"/>
    <property type="project" value="UniProtKB"/>
</dbReference>
<dbReference type="GO" id="GO:0006974">
    <property type="term" value="P:DNA damage response"/>
    <property type="evidence" value="ECO:0000250"/>
    <property type="project" value="UniProtKB"/>
</dbReference>
<dbReference type="GO" id="GO:0097680">
    <property type="term" value="P:double-strand break repair via classical nonhomologous end joining"/>
    <property type="evidence" value="ECO:0000250"/>
    <property type="project" value="UniProtKB"/>
</dbReference>
<dbReference type="GO" id="GO:0045739">
    <property type="term" value="P:positive regulation of DNA repair"/>
    <property type="evidence" value="ECO:0000250"/>
    <property type="project" value="UniProtKB"/>
</dbReference>
<dbReference type="GO" id="GO:0043161">
    <property type="term" value="P:proteasome-mediated ubiquitin-dependent protein catabolic process"/>
    <property type="evidence" value="ECO:0000318"/>
    <property type="project" value="GO_Central"/>
</dbReference>
<dbReference type="GO" id="GO:0051865">
    <property type="term" value="P:protein autoubiquitination"/>
    <property type="evidence" value="ECO:0000250"/>
    <property type="project" value="UniProtKB"/>
</dbReference>
<dbReference type="GO" id="GO:0000209">
    <property type="term" value="P:protein polyubiquitination"/>
    <property type="evidence" value="ECO:0000250"/>
    <property type="project" value="UniProtKB"/>
</dbReference>
<dbReference type="GO" id="GO:0006979">
    <property type="term" value="P:response to oxidative stress"/>
    <property type="evidence" value="ECO:0000250"/>
    <property type="project" value="UniProtKB"/>
</dbReference>
<dbReference type="GO" id="GO:0009411">
    <property type="term" value="P:response to UV"/>
    <property type="evidence" value="ECO:0000250"/>
    <property type="project" value="UniProtKB"/>
</dbReference>
<dbReference type="GO" id="GO:0000012">
    <property type="term" value="P:single strand break repair"/>
    <property type="evidence" value="ECO:0000250"/>
    <property type="project" value="UniProtKB"/>
</dbReference>
<dbReference type="GO" id="GO:0006283">
    <property type="term" value="P:transcription-coupled nucleotide-excision repair"/>
    <property type="evidence" value="ECO:0000250"/>
    <property type="project" value="UniProtKB"/>
</dbReference>
<dbReference type="FunFam" id="2.130.10.10:FF:000130">
    <property type="entry name" value="DNA excision repair protein ERCC-8"/>
    <property type="match status" value="1"/>
</dbReference>
<dbReference type="Gene3D" id="2.130.10.10">
    <property type="entry name" value="YVTN repeat-like/Quinoprotein amine dehydrogenase"/>
    <property type="match status" value="1"/>
</dbReference>
<dbReference type="InterPro" id="IPR020472">
    <property type="entry name" value="G-protein_beta_WD-40_rep"/>
</dbReference>
<dbReference type="InterPro" id="IPR042238">
    <property type="entry name" value="Rad28/ERCC8/Ckn1/ATCSA-1"/>
</dbReference>
<dbReference type="InterPro" id="IPR015943">
    <property type="entry name" value="WD40/YVTN_repeat-like_dom_sf"/>
</dbReference>
<dbReference type="InterPro" id="IPR019775">
    <property type="entry name" value="WD40_repeat_CS"/>
</dbReference>
<dbReference type="InterPro" id="IPR036322">
    <property type="entry name" value="WD40_repeat_dom_sf"/>
</dbReference>
<dbReference type="InterPro" id="IPR001680">
    <property type="entry name" value="WD40_rpt"/>
</dbReference>
<dbReference type="PANTHER" id="PTHR46202">
    <property type="entry name" value="DNA EXCISION REPAIR PROTEIN ERCC-8"/>
    <property type="match status" value="1"/>
</dbReference>
<dbReference type="PANTHER" id="PTHR46202:SF1">
    <property type="entry name" value="DNA EXCISION REPAIR PROTEIN ERCC-8"/>
    <property type="match status" value="1"/>
</dbReference>
<dbReference type="Pfam" id="PF00400">
    <property type="entry name" value="WD40"/>
    <property type="match status" value="4"/>
</dbReference>
<dbReference type="PRINTS" id="PR00320">
    <property type="entry name" value="GPROTEINBRPT"/>
</dbReference>
<dbReference type="SMART" id="SM00320">
    <property type="entry name" value="WD40"/>
    <property type="match status" value="5"/>
</dbReference>
<dbReference type="SUPFAM" id="SSF50978">
    <property type="entry name" value="WD40 repeat-like"/>
    <property type="match status" value="1"/>
</dbReference>
<dbReference type="PROSITE" id="PS00678">
    <property type="entry name" value="WD_REPEATS_1"/>
    <property type="match status" value="2"/>
</dbReference>
<dbReference type="PROSITE" id="PS50082">
    <property type="entry name" value="WD_REPEATS_2"/>
    <property type="match status" value="5"/>
</dbReference>
<dbReference type="PROSITE" id="PS50294">
    <property type="entry name" value="WD_REPEATS_REGION"/>
    <property type="match status" value="1"/>
</dbReference>
<sequence>MLGFLSARQAGLEDPLRLRRAESTRRVLGLELNKDRDVERIHCSGVNTLDIEPVEGRYMLSGGSDGVIVLYDLENSSRQPYYTCKAVCSVGRSHPDVHKYSVETVQWYPHDTGMFTSSSFDKTLKVWDTNTLQIADVFNFEETVYSHHMSPVATKHCLVAVGTRGPKVQLCDLKSGSCSHILQGHRQEILAVSWSPRYEYILATASADSRAKLWDVRRASGCLITLDQHNGKKSQAAESANTAHNGKVNGLCFTSDGLHLLTVGTDNRMRLWNSSNGENTLVNYGKVYNDSRKGLKFTVSSGCSSEFVFVPYGSTIAVYTIYSGEQITMLKGHYKSVDCCVFQSNFQELYSGSRDCNILAWVPSLCESVPDDDDETSTRSQLNPAFEDAWSSSDEEG</sequence>
<feature type="chain" id="PRO_0000050969" description="DNA excision repair protein ERCC-8">
    <location>
        <begin position="1"/>
        <end position="397"/>
    </location>
</feature>
<feature type="repeat" description="WD 1">
    <location>
        <begin position="41"/>
        <end position="81"/>
    </location>
</feature>
<feature type="repeat" description="WD 2">
    <location>
        <begin position="97"/>
        <end position="137"/>
    </location>
</feature>
<feature type="repeat" description="WD 3">
    <location>
        <begin position="184"/>
        <end position="224"/>
    </location>
</feature>
<feature type="repeat" description="WD 4">
    <location>
        <begin position="243"/>
        <end position="282"/>
    </location>
</feature>
<feature type="repeat" description="WD 5">
    <location>
        <begin position="332"/>
        <end position="371"/>
    </location>
</feature>
<feature type="region of interest" description="Disordered" evidence="2">
    <location>
        <begin position="370"/>
        <end position="397"/>
    </location>
</feature>
<feature type="modified residue" description="Phosphoserine" evidence="1">
    <location>
        <position position="391"/>
    </location>
</feature>
<feature type="modified residue" description="Phosphoserine" evidence="1">
    <location>
        <position position="392"/>
    </location>
</feature>
<feature type="modified residue" description="Phosphoserine" evidence="1">
    <location>
        <position position="393"/>
    </location>
</feature>
<protein>
    <recommendedName>
        <fullName>DNA excision repair protein ERCC-8</fullName>
    </recommendedName>
</protein>
<comment type="function">
    <text evidence="1">Substrate-recognition component of the CSA complex, a DCX (DDB1-CUL4-X-box) E3 ubiquitin-protein ligase complex, involved in transcription-coupled nucleotide excision repair (TC-NER), a process during which RNA polymerase II-blocking lesions are rapidly removed from the transcribed strand of active genes. Following recruitment to lesion-stalled RNA polymerase II (Pol II), the CSA complex mediates ubiquitination of Pol II subunit POLR2A/RPB1 at 'Lys-1268', a critical TC-NER checkpoint, governing RNA Pol II stability and initiating DNA damage excision by TFIIH recruitment. The CSA complex also promotes the ubiquitination and subsequent proteasomal degradation of ERCC6/CSB in a UV-dependent manner; ERCC6 degradation is essential for the recovery of RNA synthesis after transcription-coupled repair. Also plays a role in DNA double-strand breaks (DSSBs) repair by non-homologous end joining (NHEJ).</text>
</comment>
<comment type="pathway">
    <text evidence="1">Protein modification; protein ubiquitination.</text>
</comment>
<comment type="subunit">
    <text evidence="1">Part of the CSA complex (also named DCX(ERCC8) complex), a DCX E3 ubiquitin-protein ligase complex containing ERCC8, RBX1, DDB1 and CUL4A; the CSA complex interacts with RNA polymerase II; upon UV irradiation it interacts with the COP9 signalosome and preferentially with the hyperphosphorylated form of RNA polymerase II. Interacts with ERCC6/CSB (via CIM motif); promoting recruitment to lesion-stalled RNA polymerase II (Pol II). Interacts with KIAA1530/UVSSA. Interacts with a subunit of RNA polymerase II TFIIH.</text>
</comment>
<comment type="subcellular location">
    <subcellularLocation>
        <location evidence="1">Nucleus</location>
    </subcellularLocation>
    <subcellularLocation>
        <location evidence="1">Chromosome</location>
    </subcellularLocation>
    <subcellularLocation>
        <location evidence="1">Nucleus matrix</location>
    </subcellularLocation>
    <text evidence="1">Recruited to lesion-stalled RNA polymerase II (Pol II) sites by ERCC6/CSB. UV-induced translocation to the nuclear matrix is dependent on ERCC6/CSB.</text>
</comment>
<evidence type="ECO:0000250" key="1">
    <source>
        <dbReference type="UniProtKB" id="Q13216"/>
    </source>
</evidence>
<evidence type="ECO:0000256" key="2">
    <source>
        <dbReference type="SAM" id="MobiDB-lite"/>
    </source>
</evidence>
<gene>
    <name type="primary">ERCC8</name>
</gene>
<organism>
    <name type="scientific">Bos taurus</name>
    <name type="common">Bovine</name>
    <dbReference type="NCBI Taxonomy" id="9913"/>
    <lineage>
        <taxon>Eukaryota</taxon>
        <taxon>Metazoa</taxon>
        <taxon>Chordata</taxon>
        <taxon>Craniata</taxon>
        <taxon>Vertebrata</taxon>
        <taxon>Euteleostomi</taxon>
        <taxon>Mammalia</taxon>
        <taxon>Eutheria</taxon>
        <taxon>Laurasiatheria</taxon>
        <taxon>Artiodactyla</taxon>
        <taxon>Ruminantia</taxon>
        <taxon>Pecora</taxon>
        <taxon>Bovidae</taxon>
        <taxon>Bovinae</taxon>
        <taxon>Bos</taxon>
    </lineage>
</organism>
<accession>Q5BIM8</accession>
<proteinExistence type="evidence at transcript level"/>
<keyword id="KW-0158">Chromosome</keyword>
<keyword id="KW-0227">DNA damage</keyword>
<keyword id="KW-0234">DNA repair</keyword>
<keyword id="KW-0539">Nucleus</keyword>
<keyword id="KW-0597">Phosphoprotein</keyword>
<keyword id="KW-1185">Reference proteome</keyword>
<keyword id="KW-0677">Repeat</keyword>
<keyword id="KW-0833">Ubl conjugation pathway</keyword>
<keyword id="KW-0853">WD repeat</keyword>